<sequence>MKLLTNANTLKGTIRVPGDKSISHRAIIFGSISQGVTRIVDVLRGEDVLSTIEAFKQMGVLIEDDGEIITIYGKGFAGLTQPNNLLDMGNSGTSMRLIAGVLAGQEFEVTMVGDNSLSKRPMDRIALPLSKMGARISGVTNRDLPPLKLQGTKKLKPIFYHLPVASAQVKSALIFAALQTKGESLIVEKEQTRNHTEDMIRQFGGHLDIKDKEIRLNGGQSLVGQDIRVPGDISSAAFWIVVGLIIPNSHIILENVGINETRTGILDVVSKMGGKIKLSSVDNQVKSATLTVDYSHLQATHISGAMIPRLIDELPIIALLATQAQGTTVIADAQELKVKETDRIQVVVESLKQMGADITATADGMIIRGNTPLHAASLDCHGDHRIGMMIAIAALLVKEGEVDLSGEEAINTSYPNFLEHLEGLVNA</sequence>
<feature type="chain" id="PRO_0000088299" description="3-phosphoshikimate 1-carboxyvinyltransferase">
    <location>
        <begin position="1"/>
        <end position="427"/>
    </location>
</feature>
<feature type="active site" description="Proton acceptor" evidence="1">
    <location>
        <position position="312"/>
    </location>
</feature>
<feature type="binding site" evidence="1">
    <location>
        <position position="20"/>
    </location>
    <ligand>
        <name>3-phosphoshikimate</name>
        <dbReference type="ChEBI" id="CHEBI:145989"/>
    </ligand>
</feature>
<feature type="binding site" evidence="1">
    <location>
        <position position="20"/>
    </location>
    <ligand>
        <name>phosphoenolpyruvate</name>
        <dbReference type="ChEBI" id="CHEBI:58702"/>
    </ligand>
</feature>
<feature type="binding site" evidence="1">
    <location>
        <position position="21"/>
    </location>
    <ligand>
        <name>3-phosphoshikimate</name>
        <dbReference type="ChEBI" id="CHEBI:145989"/>
    </ligand>
</feature>
<feature type="binding site" evidence="1">
    <location>
        <position position="25"/>
    </location>
    <ligand>
        <name>3-phosphoshikimate</name>
        <dbReference type="ChEBI" id="CHEBI:145989"/>
    </ligand>
</feature>
<feature type="binding site" evidence="1">
    <location>
        <position position="92"/>
    </location>
    <ligand>
        <name>phosphoenolpyruvate</name>
        <dbReference type="ChEBI" id="CHEBI:58702"/>
    </ligand>
</feature>
<feature type="binding site" evidence="1">
    <location>
        <position position="120"/>
    </location>
    <ligand>
        <name>phosphoenolpyruvate</name>
        <dbReference type="ChEBI" id="CHEBI:58702"/>
    </ligand>
</feature>
<feature type="binding site" evidence="1">
    <location>
        <position position="166"/>
    </location>
    <ligand>
        <name>3-phosphoshikimate</name>
        <dbReference type="ChEBI" id="CHEBI:145989"/>
    </ligand>
</feature>
<feature type="binding site" evidence="1">
    <location>
        <position position="168"/>
    </location>
    <ligand>
        <name>3-phosphoshikimate</name>
        <dbReference type="ChEBI" id="CHEBI:145989"/>
    </ligand>
</feature>
<feature type="binding site" evidence="1">
    <location>
        <position position="168"/>
    </location>
    <ligand>
        <name>phosphoenolpyruvate</name>
        <dbReference type="ChEBI" id="CHEBI:58702"/>
    </ligand>
</feature>
<feature type="binding site" evidence="1">
    <location>
        <position position="312"/>
    </location>
    <ligand>
        <name>3-phosphoshikimate</name>
        <dbReference type="ChEBI" id="CHEBI:145989"/>
    </ligand>
</feature>
<feature type="binding site" evidence="1">
    <location>
        <position position="339"/>
    </location>
    <ligand>
        <name>3-phosphoshikimate</name>
        <dbReference type="ChEBI" id="CHEBI:145989"/>
    </ligand>
</feature>
<feature type="binding site" evidence="1">
    <location>
        <position position="343"/>
    </location>
    <ligand>
        <name>phosphoenolpyruvate</name>
        <dbReference type="ChEBI" id="CHEBI:58702"/>
    </ligand>
</feature>
<feature type="binding site" evidence="1">
    <location>
        <position position="385"/>
    </location>
    <ligand>
        <name>phosphoenolpyruvate</name>
        <dbReference type="ChEBI" id="CHEBI:58702"/>
    </ligand>
</feature>
<protein>
    <recommendedName>
        <fullName evidence="1">3-phosphoshikimate 1-carboxyvinyltransferase</fullName>
        <ecNumber evidence="1">2.5.1.19</ecNumber>
    </recommendedName>
    <alternativeName>
        <fullName evidence="1">5-enolpyruvylshikimate-3-phosphate synthase</fullName>
        <shortName evidence="1">EPSP synthase</shortName>
        <shortName evidence="1">EPSPS</shortName>
    </alternativeName>
</protein>
<organism>
    <name type="scientific">Streptococcus agalactiae serotype III (strain NEM316)</name>
    <dbReference type="NCBI Taxonomy" id="211110"/>
    <lineage>
        <taxon>Bacteria</taxon>
        <taxon>Bacillati</taxon>
        <taxon>Bacillota</taxon>
        <taxon>Bacilli</taxon>
        <taxon>Lactobacillales</taxon>
        <taxon>Streptococcaceae</taxon>
        <taxon>Streptococcus</taxon>
    </lineage>
</organism>
<gene>
    <name evidence="1" type="primary">aroA</name>
    <name type="ordered locus">gbs0610</name>
</gene>
<dbReference type="EC" id="2.5.1.19" evidence="1"/>
<dbReference type="EMBL" id="AL766846">
    <property type="protein sequence ID" value="CAD46254.1"/>
    <property type="molecule type" value="Genomic_DNA"/>
</dbReference>
<dbReference type="RefSeq" id="WP_000772016.1">
    <property type="nucleotide sequence ID" value="NC_004368.1"/>
</dbReference>
<dbReference type="SMR" id="Q8E6F8"/>
<dbReference type="KEGG" id="san:aroA"/>
<dbReference type="eggNOG" id="COG0128">
    <property type="taxonomic scope" value="Bacteria"/>
</dbReference>
<dbReference type="HOGENOM" id="CLU_024321_0_1_9"/>
<dbReference type="UniPathway" id="UPA00053">
    <property type="reaction ID" value="UER00089"/>
</dbReference>
<dbReference type="Proteomes" id="UP000000823">
    <property type="component" value="Chromosome"/>
</dbReference>
<dbReference type="GO" id="GO:0005737">
    <property type="term" value="C:cytoplasm"/>
    <property type="evidence" value="ECO:0007669"/>
    <property type="project" value="UniProtKB-SubCell"/>
</dbReference>
<dbReference type="GO" id="GO:0003866">
    <property type="term" value="F:3-phosphoshikimate 1-carboxyvinyltransferase activity"/>
    <property type="evidence" value="ECO:0007669"/>
    <property type="project" value="UniProtKB-UniRule"/>
</dbReference>
<dbReference type="GO" id="GO:0008652">
    <property type="term" value="P:amino acid biosynthetic process"/>
    <property type="evidence" value="ECO:0007669"/>
    <property type="project" value="UniProtKB-KW"/>
</dbReference>
<dbReference type="GO" id="GO:0009073">
    <property type="term" value="P:aromatic amino acid family biosynthetic process"/>
    <property type="evidence" value="ECO:0007669"/>
    <property type="project" value="UniProtKB-KW"/>
</dbReference>
<dbReference type="GO" id="GO:0009423">
    <property type="term" value="P:chorismate biosynthetic process"/>
    <property type="evidence" value="ECO:0007669"/>
    <property type="project" value="UniProtKB-UniRule"/>
</dbReference>
<dbReference type="CDD" id="cd01556">
    <property type="entry name" value="EPSP_synthase"/>
    <property type="match status" value="1"/>
</dbReference>
<dbReference type="FunFam" id="3.65.10.10:FF:000005">
    <property type="entry name" value="3-phosphoshikimate 1-carboxyvinyltransferase"/>
    <property type="match status" value="1"/>
</dbReference>
<dbReference type="Gene3D" id="3.65.10.10">
    <property type="entry name" value="Enolpyruvate transferase domain"/>
    <property type="match status" value="2"/>
</dbReference>
<dbReference type="HAMAP" id="MF_00210">
    <property type="entry name" value="EPSP_synth"/>
    <property type="match status" value="1"/>
</dbReference>
<dbReference type="InterPro" id="IPR001986">
    <property type="entry name" value="Enolpyruvate_Tfrase_dom"/>
</dbReference>
<dbReference type="InterPro" id="IPR036968">
    <property type="entry name" value="Enolpyruvate_Tfrase_sf"/>
</dbReference>
<dbReference type="InterPro" id="IPR006264">
    <property type="entry name" value="EPSP_synthase"/>
</dbReference>
<dbReference type="InterPro" id="IPR023193">
    <property type="entry name" value="EPSP_synthase_CS"/>
</dbReference>
<dbReference type="InterPro" id="IPR013792">
    <property type="entry name" value="RNA3'P_cycl/enolpyr_Trfase_a/b"/>
</dbReference>
<dbReference type="NCBIfam" id="TIGR01356">
    <property type="entry name" value="aroA"/>
    <property type="match status" value="1"/>
</dbReference>
<dbReference type="PANTHER" id="PTHR21090">
    <property type="entry name" value="AROM/DEHYDROQUINATE SYNTHASE"/>
    <property type="match status" value="1"/>
</dbReference>
<dbReference type="PANTHER" id="PTHR21090:SF5">
    <property type="entry name" value="PENTAFUNCTIONAL AROM POLYPEPTIDE"/>
    <property type="match status" value="1"/>
</dbReference>
<dbReference type="Pfam" id="PF00275">
    <property type="entry name" value="EPSP_synthase"/>
    <property type="match status" value="1"/>
</dbReference>
<dbReference type="PIRSF" id="PIRSF000505">
    <property type="entry name" value="EPSPS"/>
    <property type="match status" value="1"/>
</dbReference>
<dbReference type="SUPFAM" id="SSF55205">
    <property type="entry name" value="EPT/RTPC-like"/>
    <property type="match status" value="1"/>
</dbReference>
<dbReference type="PROSITE" id="PS00104">
    <property type="entry name" value="EPSP_SYNTHASE_1"/>
    <property type="match status" value="1"/>
</dbReference>
<dbReference type="PROSITE" id="PS00885">
    <property type="entry name" value="EPSP_SYNTHASE_2"/>
    <property type="match status" value="1"/>
</dbReference>
<evidence type="ECO:0000255" key="1">
    <source>
        <dbReference type="HAMAP-Rule" id="MF_00210"/>
    </source>
</evidence>
<reference key="1">
    <citation type="journal article" date="2002" name="Mol. Microbiol.">
        <title>Genome sequence of Streptococcus agalactiae, a pathogen causing invasive neonatal disease.</title>
        <authorList>
            <person name="Glaser P."/>
            <person name="Rusniok C."/>
            <person name="Buchrieser C."/>
            <person name="Chevalier F."/>
            <person name="Frangeul L."/>
            <person name="Msadek T."/>
            <person name="Zouine M."/>
            <person name="Couve E."/>
            <person name="Lalioui L."/>
            <person name="Poyart C."/>
            <person name="Trieu-Cuot P."/>
            <person name="Kunst F."/>
        </authorList>
    </citation>
    <scope>NUCLEOTIDE SEQUENCE [LARGE SCALE GENOMIC DNA]</scope>
    <source>
        <strain>NEM316</strain>
    </source>
</reference>
<comment type="function">
    <text evidence="1">Catalyzes the transfer of the enolpyruvyl moiety of phosphoenolpyruvate (PEP) to the 5-hydroxyl of shikimate-3-phosphate (S3P) to produce enolpyruvyl shikimate-3-phosphate and inorganic phosphate.</text>
</comment>
<comment type="catalytic activity">
    <reaction evidence="1">
        <text>3-phosphoshikimate + phosphoenolpyruvate = 5-O-(1-carboxyvinyl)-3-phosphoshikimate + phosphate</text>
        <dbReference type="Rhea" id="RHEA:21256"/>
        <dbReference type="ChEBI" id="CHEBI:43474"/>
        <dbReference type="ChEBI" id="CHEBI:57701"/>
        <dbReference type="ChEBI" id="CHEBI:58702"/>
        <dbReference type="ChEBI" id="CHEBI:145989"/>
        <dbReference type="EC" id="2.5.1.19"/>
    </reaction>
    <physiologicalReaction direction="left-to-right" evidence="1">
        <dbReference type="Rhea" id="RHEA:21257"/>
    </physiologicalReaction>
</comment>
<comment type="pathway">
    <text evidence="1">Metabolic intermediate biosynthesis; chorismate biosynthesis; chorismate from D-erythrose 4-phosphate and phosphoenolpyruvate: step 6/7.</text>
</comment>
<comment type="subunit">
    <text evidence="1">Monomer.</text>
</comment>
<comment type="subcellular location">
    <subcellularLocation>
        <location evidence="1">Cytoplasm</location>
    </subcellularLocation>
</comment>
<comment type="similarity">
    <text evidence="1">Belongs to the EPSP synthase family.</text>
</comment>
<accession>Q8E6F8</accession>
<name>AROA_STRA3</name>
<keyword id="KW-0028">Amino-acid biosynthesis</keyword>
<keyword id="KW-0057">Aromatic amino acid biosynthesis</keyword>
<keyword id="KW-0963">Cytoplasm</keyword>
<keyword id="KW-0808">Transferase</keyword>
<proteinExistence type="inferred from homology"/>